<keyword id="KW-0450">Lipoyl</keyword>
<keyword id="KW-1185">Reference proteome</keyword>
<comment type="function">
    <text evidence="1">The glycine cleavage system catalyzes the degradation of glycine. The H protein shuttles the methylamine group of glycine from the P protein to the T protein.</text>
</comment>
<comment type="cofactor">
    <cofactor evidence="1">
        <name>(R)-lipoate</name>
        <dbReference type="ChEBI" id="CHEBI:83088"/>
    </cofactor>
    <text evidence="1">Binds 1 lipoyl cofactor covalently.</text>
</comment>
<comment type="subunit">
    <text evidence="1">The glycine cleavage system is composed of four proteins: P, T, L and H.</text>
</comment>
<comment type="similarity">
    <text evidence="1">Belongs to the GcvH family.</text>
</comment>
<gene>
    <name evidence="1" type="primary">gcvH</name>
    <name type="ordered locus">VC_A0277</name>
</gene>
<sequence length="126" mass="13931">MDKTLKFTESHEWVRDNGDGTVTIGISEHAQEMLGDVVFVELPEIDAEIDAGDSFSLVESVKAASDIYAPVTGVVIEVNEDLQNSPELINEEPYDGGWIVKVKMSDPDELKDLKDAEEYLASIEED</sequence>
<dbReference type="EMBL" id="AE003853">
    <property type="protein sequence ID" value="AAF96187.1"/>
    <property type="molecule type" value="Genomic_DNA"/>
</dbReference>
<dbReference type="PIR" id="H82479">
    <property type="entry name" value="H82479"/>
</dbReference>
<dbReference type="RefSeq" id="NP_232674.1">
    <property type="nucleotide sequence ID" value="NC_002506.1"/>
</dbReference>
<dbReference type="RefSeq" id="WP_000361811.1">
    <property type="nucleotide sequence ID" value="NZ_LT906615.1"/>
</dbReference>
<dbReference type="SMR" id="Q9KMP5"/>
<dbReference type="STRING" id="243277.VC_A0277"/>
<dbReference type="DNASU" id="2612026"/>
<dbReference type="EnsemblBacteria" id="AAF96187">
    <property type="protein sequence ID" value="AAF96187"/>
    <property type="gene ID" value="VC_A0277"/>
</dbReference>
<dbReference type="GeneID" id="89512304"/>
<dbReference type="KEGG" id="vch:VC_A0277"/>
<dbReference type="PATRIC" id="fig|243277.26.peg.2911"/>
<dbReference type="eggNOG" id="COG0509">
    <property type="taxonomic scope" value="Bacteria"/>
</dbReference>
<dbReference type="HOGENOM" id="CLU_097408_2_0_6"/>
<dbReference type="Proteomes" id="UP000000584">
    <property type="component" value="Chromosome 2"/>
</dbReference>
<dbReference type="GO" id="GO:0005829">
    <property type="term" value="C:cytosol"/>
    <property type="evidence" value="ECO:0000318"/>
    <property type="project" value="GO_Central"/>
</dbReference>
<dbReference type="GO" id="GO:0005960">
    <property type="term" value="C:glycine cleavage complex"/>
    <property type="evidence" value="ECO:0007669"/>
    <property type="project" value="InterPro"/>
</dbReference>
<dbReference type="GO" id="GO:0019464">
    <property type="term" value="P:glycine decarboxylation via glycine cleavage system"/>
    <property type="evidence" value="ECO:0007669"/>
    <property type="project" value="UniProtKB-UniRule"/>
</dbReference>
<dbReference type="CDD" id="cd06848">
    <property type="entry name" value="GCS_H"/>
    <property type="match status" value="1"/>
</dbReference>
<dbReference type="FunFam" id="2.40.50.100:FF:000011">
    <property type="entry name" value="Glycine cleavage system H protein"/>
    <property type="match status" value="1"/>
</dbReference>
<dbReference type="Gene3D" id="2.40.50.100">
    <property type="match status" value="1"/>
</dbReference>
<dbReference type="HAMAP" id="MF_00272">
    <property type="entry name" value="GcvH"/>
    <property type="match status" value="1"/>
</dbReference>
<dbReference type="InterPro" id="IPR003016">
    <property type="entry name" value="2-oxoA_DH_lipoyl-BS"/>
</dbReference>
<dbReference type="InterPro" id="IPR000089">
    <property type="entry name" value="Biotin_lipoyl"/>
</dbReference>
<dbReference type="InterPro" id="IPR002930">
    <property type="entry name" value="GCV_H"/>
</dbReference>
<dbReference type="InterPro" id="IPR033753">
    <property type="entry name" value="GCV_H/Fam206"/>
</dbReference>
<dbReference type="InterPro" id="IPR017453">
    <property type="entry name" value="GCV_H_sub"/>
</dbReference>
<dbReference type="InterPro" id="IPR011053">
    <property type="entry name" value="Single_hybrid_motif"/>
</dbReference>
<dbReference type="NCBIfam" id="TIGR00527">
    <property type="entry name" value="gcvH"/>
    <property type="match status" value="1"/>
</dbReference>
<dbReference type="NCBIfam" id="NF002270">
    <property type="entry name" value="PRK01202.1"/>
    <property type="match status" value="1"/>
</dbReference>
<dbReference type="PANTHER" id="PTHR11715">
    <property type="entry name" value="GLYCINE CLEAVAGE SYSTEM H PROTEIN"/>
    <property type="match status" value="1"/>
</dbReference>
<dbReference type="PANTHER" id="PTHR11715:SF3">
    <property type="entry name" value="GLYCINE CLEAVAGE SYSTEM H PROTEIN-RELATED"/>
    <property type="match status" value="1"/>
</dbReference>
<dbReference type="Pfam" id="PF01597">
    <property type="entry name" value="GCV_H"/>
    <property type="match status" value="1"/>
</dbReference>
<dbReference type="SUPFAM" id="SSF51230">
    <property type="entry name" value="Single hybrid motif"/>
    <property type="match status" value="1"/>
</dbReference>
<dbReference type="PROSITE" id="PS50968">
    <property type="entry name" value="BIOTINYL_LIPOYL"/>
    <property type="match status" value="1"/>
</dbReference>
<dbReference type="PROSITE" id="PS00189">
    <property type="entry name" value="LIPOYL"/>
    <property type="match status" value="1"/>
</dbReference>
<name>GCSH_VIBCH</name>
<feature type="chain" id="PRO_0000166263" description="Glycine cleavage system H protein">
    <location>
        <begin position="1"/>
        <end position="126"/>
    </location>
</feature>
<feature type="domain" description="Lipoyl-binding" evidence="2">
    <location>
        <begin position="21"/>
        <end position="103"/>
    </location>
</feature>
<feature type="modified residue" description="N6-lipoyllysine" evidence="1">
    <location>
        <position position="62"/>
    </location>
</feature>
<accession>Q9KMP5</accession>
<organism>
    <name type="scientific">Vibrio cholerae serotype O1 (strain ATCC 39315 / El Tor Inaba N16961)</name>
    <dbReference type="NCBI Taxonomy" id="243277"/>
    <lineage>
        <taxon>Bacteria</taxon>
        <taxon>Pseudomonadati</taxon>
        <taxon>Pseudomonadota</taxon>
        <taxon>Gammaproteobacteria</taxon>
        <taxon>Vibrionales</taxon>
        <taxon>Vibrionaceae</taxon>
        <taxon>Vibrio</taxon>
    </lineage>
</organism>
<proteinExistence type="inferred from homology"/>
<evidence type="ECO:0000255" key="1">
    <source>
        <dbReference type="HAMAP-Rule" id="MF_00272"/>
    </source>
</evidence>
<evidence type="ECO:0000255" key="2">
    <source>
        <dbReference type="PROSITE-ProRule" id="PRU01066"/>
    </source>
</evidence>
<reference key="1">
    <citation type="journal article" date="2000" name="Nature">
        <title>DNA sequence of both chromosomes of the cholera pathogen Vibrio cholerae.</title>
        <authorList>
            <person name="Heidelberg J.F."/>
            <person name="Eisen J.A."/>
            <person name="Nelson W.C."/>
            <person name="Clayton R.A."/>
            <person name="Gwinn M.L."/>
            <person name="Dodson R.J."/>
            <person name="Haft D.H."/>
            <person name="Hickey E.K."/>
            <person name="Peterson J.D."/>
            <person name="Umayam L.A."/>
            <person name="Gill S.R."/>
            <person name="Nelson K.E."/>
            <person name="Read T.D."/>
            <person name="Tettelin H."/>
            <person name="Richardson D.L."/>
            <person name="Ermolaeva M.D."/>
            <person name="Vamathevan J.J."/>
            <person name="Bass S."/>
            <person name="Qin H."/>
            <person name="Dragoi I."/>
            <person name="Sellers P."/>
            <person name="McDonald L.A."/>
            <person name="Utterback T.R."/>
            <person name="Fleischmann R.D."/>
            <person name="Nierman W.C."/>
            <person name="White O."/>
            <person name="Salzberg S.L."/>
            <person name="Smith H.O."/>
            <person name="Colwell R.R."/>
            <person name="Mekalanos J.J."/>
            <person name="Venter J.C."/>
            <person name="Fraser C.M."/>
        </authorList>
    </citation>
    <scope>NUCLEOTIDE SEQUENCE [LARGE SCALE GENOMIC DNA]</scope>
    <source>
        <strain>ATCC 39315 / El Tor Inaba N16961</strain>
    </source>
</reference>
<protein>
    <recommendedName>
        <fullName evidence="1">Glycine cleavage system H protein</fullName>
    </recommendedName>
</protein>